<sequence>MSTIEERVKKIIGEQLGVKQEEVTNNASFVEDLGADSLDTVELVMALEEEFDTEIPDEEAEKITTVQAAIDYINGHQA</sequence>
<comment type="function">
    <text evidence="1">Carrier of the growing fatty acid chain in fatty acid biosynthesis.</text>
</comment>
<comment type="pathway">
    <text evidence="1">Lipid metabolism; fatty acid biosynthesis.</text>
</comment>
<comment type="subcellular location">
    <subcellularLocation>
        <location evidence="1">Cytoplasm</location>
    </subcellularLocation>
</comment>
<comment type="PTM">
    <text evidence="1">4'-phosphopantetheine is transferred from CoA to a specific serine of apo-ACP by AcpS. This modification is essential for activity because fatty acids are bound in thioester linkage to the sulfhydryl of the prosthetic group.</text>
</comment>
<comment type="similarity">
    <text evidence="1">Belongs to the acyl carrier protein (ACP) family.</text>
</comment>
<proteinExistence type="inferred from homology"/>
<protein>
    <recommendedName>
        <fullName evidence="1">Acyl carrier protein</fullName>
        <shortName evidence="1">ACP</shortName>
    </recommendedName>
</protein>
<dbReference type="EMBL" id="CP001396">
    <property type="protein sequence ID" value="ACR61922.1"/>
    <property type="molecule type" value="Genomic_DNA"/>
</dbReference>
<dbReference type="RefSeq" id="WP_000103754.1">
    <property type="nucleotide sequence ID" value="NC_012759.1"/>
</dbReference>
<dbReference type="SMR" id="C4ZS34"/>
<dbReference type="GeneID" id="98387866"/>
<dbReference type="KEGG" id="ebw:BWG_0942"/>
<dbReference type="HOGENOM" id="CLU_108696_5_1_6"/>
<dbReference type="UniPathway" id="UPA00094"/>
<dbReference type="GO" id="GO:0005829">
    <property type="term" value="C:cytosol"/>
    <property type="evidence" value="ECO:0007669"/>
    <property type="project" value="TreeGrafter"/>
</dbReference>
<dbReference type="GO" id="GO:0016020">
    <property type="term" value="C:membrane"/>
    <property type="evidence" value="ECO:0007669"/>
    <property type="project" value="GOC"/>
</dbReference>
<dbReference type="GO" id="GO:0000035">
    <property type="term" value="F:acyl binding"/>
    <property type="evidence" value="ECO:0007669"/>
    <property type="project" value="TreeGrafter"/>
</dbReference>
<dbReference type="GO" id="GO:0000036">
    <property type="term" value="F:acyl carrier activity"/>
    <property type="evidence" value="ECO:0007669"/>
    <property type="project" value="UniProtKB-UniRule"/>
</dbReference>
<dbReference type="GO" id="GO:0009245">
    <property type="term" value="P:lipid A biosynthetic process"/>
    <property type="evidence" value="ECO:0007669"/>
    <property type="project" value="TreeGrafter"/>
</dbReference>
<dbReference type="FunFam" id="1.10.1200.10:FF:000001">
    <property type="entry name" value="Acyl carrier protein"/>
    <property type="match status" value="1"/>
</dbReference>
<dbReference type="Gene3D" id="1.10.1200.10">
    <property type="entry name" value="ACP-like"/>
    <property type="match status" value="1"/>
</dbReference>
<dbReference type="HAMAP" id="MF_01217">
    <property type="entry name" value="Acyl_carrier"/>
    <property type="match status" value="1"/>
</dbReference>
<dbReference type="InterPro" id="IPR003231">
    <property type="entry name" value="ACP"/>
</dbReference>
<dbReference type="InterPro" id="IPR036736">
    <property type="entry name" value="ACP-like_sf"/>
</dbReference>
<dbReference type="InterPro" id="IPR009081">
    <property type="entry name" value="PP-bd_ACP"/>
</dbReference>
<dbReference type="InterPro" id="IPR006162">
    <property type="entry name" value="Ppantetheine_attach_site"/>
</dbReference>
<dbReference type="NCBIfam" id="TIGR00517">
    <property type="entry name" value="acyl_carrier"/>
    <property type="match status" value="1"/>
</dbReference>
<dbReference type="NCBIfam" id="NF002148">
    <property type="entry name" value="PRK00982.1-2"/>
    <property type="match status" value="1"/>
</dbReference>
<dbReference type="NCBIfam" id="NF002149">
    <property type="entry name" value="PRK00982.1-3"/>
    <property type="match status" value="1"/>
</dbReference>
<dbReference type="NCBIfam" id="NF002150">
    <property type="entry name" value="PRK00982.1-4"/>
    <property type="match status" value="1"/>
</dbReference>
<dbReference type="NCBIfam" id="NF002151">
    <property type="entry name" value="PRK00982.1-5"/>
    <property type="match status" value="1"/>
</dbReference>
<dbReference type="PANTHER" id="PTHR20863">
    <property type="entry name" value="ACYL CARRIER PROTEIN"/>
    <property type="match status" value="1"/>
</dbReference>
<dbReference type="PANTHER" id="PTHR20863:SF76">
    <property type="entry name" value="CARRIER DOMAIN-CONTAINING PROTEIN"/>
    <property type="match status" value="1"/>
</dbReference>
<dbReference type="Pfam" id="PF00550">
    <property type="entry name" value="PP-binding"/>
    <property type="match status" value="1"/>
</dbReference>
<dbReference type="SUPFAM" id="SSF47336">
    <property type="entry name" value="ACP-like"/>
    <property type="match status" value="1"/>
</dbReference>
<dbReference type="PROSITE" id="PS50075">
    <property type="entry name" value="CARRIER"/>
    <property type="match status" value="1"/>
</dbReference>
<dbReference type="PROSITE" id="PS00012">
    <property type="entry name" value="PHOSPHOPANTETHEINE"/>
    <property type="match status" value="1"/>
</dbReference>
<reference key="1">
    <citation type="journal article" date="2009" name="J. Bacteriol.">
        <title>Genomic sequencing reveals regulatory mutations and recombinational events in the widely used MC4100 lineage of Escherichia coli K-12.</title>
        <authorList>
            <person name="Ferenci T."/>
            <person name="Zhou Z."/>
            <person name="Betteridge T."/>
            <person name="Ren Y."/>
            <person name="Liu Y."/>
            <person name="Feng L."/>
            <person name="Reeves P.R."/>
            <person name="Wang L."/>
        </authorList>
    </citation>
    <scope>NUCLEOTIDE SEQUENCE [LARGE SCALE GENOMIC DNA]</scope>
    <source>
        <strain>K12 / MC4100 / BW2952</strain>
    </source>
</reference>
<name>ACP_ECOBW</name>
<gene>
    <name evidence="1" type="primary">acpP</name>
    <name type="ordered locus">BWG_0942</name>
</gene>
<organism>
    <name type="scientific">Escherichia coli (strain K12 / MC4100 / BW2952)</name>
    <dbReference type="NCBI Taxonomy" id="595496"/>
    <lineage>
        <taxon>Bacteria</taxon>
        <taxon>Pseudomonadati</taxon>
        <taxon>Pseudomonadota</taxon>
        <taxon>Gammaproteobacteria</taxon>
        <taxon>Enterobacterales</taxon>
        <taxon>Enterobacteriaceae</taxon>
        <taxon>Escherichia</taxon>
    </lineage>
</organism>
<accession>C4ZS34</accession>
<feature type="chain" id="PRO_1000213907" description="Acyl carrier protein">
    <location>
        <begin position="1"/>
        <end position="78"/>
    </location>
</feature>
<feature type="domain" description="Carrier" evidence="2">
    <location>
        <begin position="2"/>
        <end position="77"/>
    </location>
</feature>
<feature type="modified residue" description="O-(pantetheine 4'-phosphoryl)serine" evidence="2">
    <location>
        <position position="37"/>
    </location>
</feature>
<evidence type="ECO:0000255" key="1">
    <source>
        <dbReference type="HAMAP-Rule" id="MF_01217"/>
    </source>
</evidence>
<evidence type="ECO:0000255" key="2">
    <source>
        <dbReference type="PROSITE-ProRule" id="PRU00258"/>
    </source>
</evidence>
<keyword id="KW-0963">Cytoplasm</keyword>
<keyword id="KW-0275">Fatty acid biosynthesis</keyword>
<keyword id="KW-0276">Fatty acid metabolism</keyword>
<keyword id="KW-0444">Lipid biosynthesis</keyword>
<keyword id="KW-0443">Lipid metabolism</keyword>
<keyword id="KW-0596">Phosphopantetheine</keyword>
<keyword id="KW-0597">Phosphoprotein</keyword>